<keyword id="KW-0064">Aspartyl protease</keyword>
<keyword id="KW-0255">Endonuclease</keyword>
<keyword id="KW-0378">Hydrolase</keyword>
<keyword id="KW-0540">Nuclease</keyword>
<keyword id="KW-0548">Nucleotidyltransferase</keyword>
<keyword id="KW-0645">Protease</keyword>
<keyword id="KW-0695">RNA-directed DNA polymerase</keyword>
<keyword id="KW-0808">Transferase</keyword>
<accession>Q00962</accession>
<gene>
    <name type="ORF">ORF V</name>
</gene>
<feature type="chain" id="PRO_0000222053" description="Enzymatic polyprotein">
    <location>
        <begin position="1"/>
        <end position="680"/>
    </location>
</feature>
<feature type="domain" description="Reverse transcriptase" evidence="2">
    <location>
        <begin position="273"/>
        <end position="453"/>
    </location>
</feature>
<feature type="region of interest" description="Protease" evidence="1">
    <location>
        <begin position="41"/>
        <end position="131"/>
    </location>
</feature>
<feature type="active site" evidence="1">
    <location>
        <position position="46"/>
    </location>
</feature>
<protein>
    <recommendedName>
        <fullName>Enzymatic polyprotein</fullName>
    </recommendedName>
    <domain>
        <recommendedName>
            <fullName>Aspartic protease</fullName>
            <ecNumber>3.4.23.-</ecNumber>
        </recommendedName>
    </domain>
    <domain>
        <recommendedName>
            <fullName>Endonuclease</fullName>
        </recommendedName>
    </domain>
    <domain>
        <recommendedName>
            <fullName>Reverse transcriptase</fullName>
            <ecNumber>2.7.7.49</ecNumber>
        </recommendedName>
    </domain>
</protein>
<reference key="1">
    <citation type="journal article" date="1992" name="Plant Physiol.">
        <title>Nucleotide sequence of cauliflower mosaic virus isolate NY8153.</title>
        <authorList>
            <person name="Chenault K.D."/>
            <person name="Steffens D.L."/>
            <person name="Melcher U.K."/>
        </authorList>
    </citation>
    <scope>NUCLEOTIDE SEQUENCE [GENOMIC DNA]</scope>
</reference>
<organism>
    <name type="scientific">Cauliflower mosaic virus (strain NY8153)</name>
    <name type="common">CaMV</name>
    <dbReference type="NCBI Taxonomy" id="31557"/>
    <lineage>
        <taxon>Viruses</taxon>
        <taxon>Riboviria</taxon>
        <taxon>Pararnavirae</taxon>
        <taxon>Artverviricota</taxon>
        <taxon>Revtraviricetes</taxon>
        <taxon>Ortervirales</taxon>
        <taxon>Caulimoviridae</taxon>
        <taxon>Caulimovirus</taxon>
        <taxon>Caulimovirus tessellobrassicae</taxon>
    </lineage>
</organism>
<dbReference type="EC" id="3.4.23.-"/>
<dbReference type="EC" id="2.7.7.49"/>
<dbReference type="EMBL" id="M90541">
    <property type="protein sequence ID" value="AAA46358.1"/>
    <property type="molecule type" value="Genomic_DNA"/>
</dbReference>
<dbReference type="SMR" id="Q00962"/>
<dbReference type="MEROPS" id="A03.001"/>
<dbReference type="Proteomes" id="UP000008441">
    <property type="component" value="Genome"/>
</dbReference>
<dbReference type="GO" id="GO:0004190">
    <property type="term" value="F:aspartic-type endopeptidase activity"/>
    <property type="evidence" value="ECO:0007669"/>
    <property type="project" value="UniProtKB-KW"/>
</dbReference>
<dbReference type="GO" id="GO:0004519">
    <property type="term" value="F:endonuclease activity"/>
    <property type="evidence" value="ECO:0007669"/>
    <property type="project" value="UniProtKB-KW"/>
</dbReference>
<dbReference type="GO" id="GO:0003964">
    <property type="term" value="F:RNA-directed DNA polymerase activity"/>
    <property type="evidence" value="ECO:0007669"/>
    <property type="project" value="UniProtKB-KW"/>
</dbReference>
<dbReference type="GO" id="GO:0006508">
    <property type="term" value="P:proteolysis"/>
    <property type="evidence" value="ECO:0007669"/>
    <property type="project" value="UniProtKB-KW"/>
</dbReference>
<dbReference type="CDD" id="cd00303">
    <property type="entry name" value="retropepsin_like"/>
    <property type="match status" value="1"/>
</dbReference>
<dbReference type="CDD" id="cd09274">
    <property type="entry name" value="RNase_HI_RT_Ty3"/>
    <property type="match status" value="1"/>
</dbReference>
<dbReference type="CDD" id="cd01647">
    <property type="entry name" value="RT_LTR"/>
    <property type="match status" value="1"/>
</dbReference>
<dbReference type="Gene3D" id="3.30.70.270">
    <property type="match status" value="2"/>
</dbReference>
<dbReference type="Gene3D" id="2.40.70.10">
    <property type="entry name" value="Acid Proteases"/>
    <property type="match status" value="1"/>
</dbReference>
<dbReference type="Gene3D" id="3.10.10.10">
    <property type="entry name" value="HIV Type 1 Reverse Transcriptase, subunit A, domain 1"/>
    <property type="match status" value="1"/>
</dbReference>
<dbReference type="InterPro" id="IPR043502">
    <property type="entry name" value="DNA/RNA_pol_sf"/>
</dbReference>
<dbReference type="InterPro" id="IPR000588">
    <property type="entry name" value="Pept_A3A"/>
</dbReference>
<dbReference type="InterPro" id="IPR021109">
    <property type="entry name" value="Peptidase_aspartic_dom_sf"/>
</dbReference>
<dbReference type="InterPro" id="IPR043128">
    <property type="entry name" value="Rev_trsase/Diguanyl_cyclase"/>
</dbReference>
<dbReference type="InterPro" id="IPR000477">
    <property type="entry name" value="RT_dom"/>
</dbReference>
<dbReference type="InterPro" id="IPR041373">
    <property type="entry name" value="RT_RNaseH"/>
</dbReference>
<dbReference type="InterPro" id="IPR051320">
    <property type="entry name" value="Viral_Replic_Matur_Polypro"/>
</dbReference>
<dbReference type="PANTHER" id="PTHR33064">
    <property type="entry name" value="POL PROTEIN"/>
    <property type="match status" value="1"/>
</dbReference>
<dbReference type="PANTHER" id="PTHR33064:SF37">
    <property type="entry name" value="RIBONUCLEASE H"/>
    <property type="match status" value="1"/>
</dbReference>
<dbReference type="Pfam" id="PF02160">
    <property type="entry name" value="Peptidase_A3"/>
    <property type="match status" value="1"/>
</dbReference>
<dbReference type="Pfam" id="PF17917">
    <property type="entry name" value="RT_RNaseH"/>
    <property type="match status" value="1"/>
</dbReference>
<dbReference type="Pfam" id="PF00078">
    <property type="entry name" value="RVT_1"/>
    <property type="match status" value="1"/>
</dbReference>
<dbReference type="PRINTS" id="PR00731">
    <property type="entry name" value="CAULIMOPTASE"/>
</dbReference>
<dbReference type="SUPFAM" id="SSF56672">
    <property type="entry name" value="DNA/RNA polymerases"/>
    <property type="match status" value="1"/>
</dbReference>
<dbReference type="PROSITE" id="PS50878">
    <property type="entry name" value="RT_POL"/>
    <property type="match status" value="1"/>
</dbReference>
<name>POL_CAMVN</name>
<proteinExistence type="inferred from homology"/>
<comment type="function">
    <text evidence="1">Encodes for at least two polypeptides: protease (PR) and reverse transcriptase (RT). The protease processes the polyprotein in cis. Reverse transcriptase is multifunctional enzyme that converts the viral RNA genome into dsDNA in viral cytoplasmic capsids. This enzyme displays a DNA polymerase activity that can copy either DNA or RNA templates, and a ribonuclease H (RNase H) activity that cleaves the RNA strand of RNA-DNA heteroduplexes in a partially processive 3'- to 5'-endonucleasic mode. Neo-synthesized pregenomic RNA (pgRNA) are encapsidated, and reverse-transcribed inside the nucleocapsid. Partial (+)DNA is synthesized from the (-)DNA template and generates the relaxed circular DNA (RC-DNA) genome. After budding and infection, the RC-DNA migrates in the nucleus, and is converted into a plasmid-like covalently closed circular DNA (cccDNA) (By similarity).</text>
</comment>
<comment type="catalytic activity">
    <reaction evidence="2">
        <text>DNA(n) + a 2'-deoxyribonucleoside 5'-triphosphate = DNA(n+1) + diphosphate</text>
        <dbReference type="Rhea" id="RHEA:22508"/>
        <dbReference type="Rhea" id="RHEA-COMP:17339"/>
        <dbReference type="Rhea" id="RHEA-COMP:17340"/>
        <dbReference type="ChEBI" id="CHEBI:33019"/>
        <dbReference type="ChEBI" id="CHEBI:61560"/>
        <dbReference type="ChEBI" id="CHEBI:173112"/>
        <dbReference type="EC" id="2.7.7.49"/>
    </reaction>
</comment>
<comment type="domain">
    <text evidence="1">The polymerase/reverse transcriptase (RT) and ribonuclease H (RH) domains are structured in five subdomains: finger, palm, thumb, connection and RNase H. Within the palm subdomain, the 'primer grip' region is thought to be involved in the positioning of the primer terminus for accommodating the incoming nucleotide. The RH domain stabilizes the association of RT with primer-template (By similarity).</text>
</comment>
<comment type="similarity">
    <text evidence="3">Belongs to the caulimoviridae enzymatic polyprotein family.</text>
</comment>
<organismHost>
    <name type="scientific">Arabidopsis thaliana</name>
    <name type="common">Mouse-ear cress</name>
    <dbReference type="NCBI Taxonomy" id="3702"/>
</organismHost>
<organismHost>
    <name type="scientific">Brassica</name>
    <dbReference type="NCBI Taxonomy" id="3705"/>
</organismHost>
<organismHost>
    <name type="scientific">Raphanus</name>
    <dbReference type="NCBI Taxonomy" id="3725"/>
</organismHost>
<evidence type="ECO:0000250" key="1"/>
<evidence type="ECO:0000255" key="2">
    <source>
        <dbReference type="PROSITE-ProRule" id="PRU00405"/>
    </source>
</evidence>
<evidence type="ECO:0000305" key="3"/>
<sequence>MMNHLLLKTQTQTEQVMNVTNPNSIYIKGRLYFKGYKKIELHCFVDTGASLCIASKFVIPEEHWVNAERPIMVKIADGSSITISKVCKDIDLIIVGVIFKIPTVYQQESGIDFIIGNNFCQLYEPFIQFTDRVIFTKNKSYPVHIAKLTRAVRVGTEGFLESMKKRSKTQQPEPVNISTNKIENPLEEIAILSEGRRLSEEKLFITQQRMQKTEELLEKVCSENPLDPNKTKQWMKASIKLSDPSKAIKVKPMKYSPMDREEFDKQIKELLDLKVIKPSKSPHMAPAFLVNNEAENGRGNKRMVVNYKAMNKATVGDAYNLPNKDELLTLIRGKKIFSSFDCKSGFWQVLLDQESRPLTAFTCPQGHYEWNVVPFGLKQAPSIFQRHMDEAFRVFRKFCCVYVDDIVVFSNNEEDHLLHVAMILQKCNQHGIILSKKKAQLFKKKINFLGLEIDEGTHKPQGHILEHINKFPDTLEDKKQLQRFLGILTYASDYIPNLAQMRQPLQAKLKENVPWKWTKEDTLYMQKVKKNLQGFPPLHHPLPEEKLIIETDASDDYWGGMLKAIKINEGTNTELICRYRSGSFKAAERNYHSNDKETLAVINTIKKFSIYLTPVHFLIRTDNTHFKSFVNLNYKGDSKLGRNIRWQAWLSHYSFDVEHIKGTDNHFADFLSREFNKVNS</sequence>